<reference key="1">
    <citation type="journal article" date="1996" name="Microbiology">
        <title>Organization of the Bacillus subtilis 168 chromosome between kdg and the attachment site of the SP beta prophage: use of long accurate PCR and yeast artificial chromosomes for sequencing.</title>
        <authorList>
            <person name="Capuano V."/>
            <person name="Galleron N."/>
            <person name="Pujic P."/>
            <person name="Sorokin A."/>
            <person name="Ehrlich S.D."/>
        </authorList>
    </citation>
    <scope>NUCLEOTIDE SEQUENCE [GENOMIC DNA]</scope>
    <source>
        <strain>168 / Marburg / ATCC 6051 / DSM 10 / JCM 1465 / NBRC 13719 / NCIMB 3610 / NRRL NRS-744 / VKM B-501</strain>
    </source>
</reference>
<reference key="2">
    <citation type="journal article" date="1997" name="Nature">
        <title>The complete genome sequence of the Gram-positive bacterium Bacillus subtilis.</title>
        <authorList>
            <person name="Kunst F."/>
            <person name="Ogasawara N."/>
            <person name="Moszer I."/>
            <person name="Albertini A.M."/>
            <person name="Alloni G."/>
            <person name="Azevedo V."/>
            <person name="Bertero M.G."/>
            <person name="Bessieres P."/>
            <person name="Bolotin A."/>
            <person name="Borchert S."/>
            <person name="Borriss R."/>
            <person name="Boursier L."/>
            <person name="Brans A."/>
            <person name="Braun M."/>
            <person name="Brignell S.C."/>
            <person name="Bron S."/>
            <person name="Brouillet S."/>
            <person name="Bruschi C.V."/>
            <person name="Caldwell B."/>
            <person name="Capuano V."/>
            <person name="Carter N.M."/>
            <person name="Choi S.-K."/>
            <person name="Codani J.-J."/>
            <person name="Connerton I.F."/>
            <person name="Cummings N.J."/>
            <person name="Daniel R.A."/>
            <person name="Denizot F."/>
            <person name="Devine K.M."/>
            <person name="Duesterhoeft A."/>
            <person name="Ehrlich S.D."/>
            <person name="Emmerson P.T."/>
            <person name="Entian K.-D."/>
            <person name="Errington J."/>
            <person name="Fabret C."/>
            <person name="Ferrari E."/>
            <person name="Foulger D."/>
            <person name="Fritz C."/>
            <person name="Fujita M."/>
            <person name="Fujita Y."/>
            <person name="Fuma S."/>
            <person name="Galizzi A."/>
            <person name="Galleron N."/>
            <person name="Ghim S.-Y."/>
            <person name="Glaser P."/>
            <person name="Goffeau A."/>
            <person name="Golightly E.J."/>
            <person name="Grandi G."/>
            <person name="Guiseppi G."/>
            <person name="Guy B.J."/>
            <person name="Haga K."/>
            <person name="Haiech J."/>
            <person name="Harwood C.R."/>
            <person name="Henaut A."/>
            <person name="Hilbert H."/>
            <person name="Holsappel S."/>
            <person name="Hosono S."/>
            <person name="Hullo M.-F."/>
            <person name="Itaya M."/>
            <person name="Jones L.-M."/>
            <person name="Joris B."/>
            <person name="Karamata D."/>
            <person name="Kasahara Y."/>
            <person name="Klaerr-Blanchard M."/>
            <person name="Klein C."/>
            <person name="Kobayashi Y."/>
            <person name="Koetter P."/>
            <person name="Koningstein G."/>
            <person name="Krogh S."/>
            <person name="Kumano M."/>
            <person name="Kurita K."/>
            <person name="Lapidus A."/>
            <person name="Lardinois S."/>
            <person name="Lauber J."/>
            <person name="Lazarevic V."/>
            <person name="Lee S.-M."/>
            <person name="Levine A."/>
            <person name="Liu H."/>
            <person name="Masuda S."/>
            <person name="Mauel C."/>
            <person name="Medigue C."/>
            <person name="Medina N."/>
            <person name="Mellado R.P."/>
            <person name="Mizuno M."/>
            <person name="Moestl D."/>
            <person name="Nakai S."/>
            <person name="Noback M."/>
            <person name="Noone D."/>
            <person name="O'Reilly M."/>
            <person name="Ogawa K."/>
            <person name="Ogiwara A."/>
            <person name="Oudega B."/>
            <person name="Park S.-H."/>
            <person name="Parro V."/>
            <person name="Pohl T.M."/>
            <person name="Portetelle D."/>
            <person name="Porwollik S."/>
            <person name="Prescott A.M."/>
            <person name="Presecan E."/>
            <person name="Pujic P."/>
            <person name="Purnelle B."/>
            <person name="Rapoport G."/>
            <person name="Rey M."/>
            <person name="Reynolds S."/>
            <person name="Rieger M."/>
            <person name="Rivolta C."/>
            <person name="Rocha E."/>
            <person name="Roche B."/>
            <person name="Rose M."/>
            <person name="Sadaie Y."/>
            <person name="Sato T."/>
            <person name="Scanlan E."/>
            <person name="Schleich S."/>
            <person name="Schroeter R."/>
            <person name="Scoffone F."/>
            <person name="Sekiguchi J."/>
            <person name="Sekowska A."/>
            <person name="Seror S.J."/>
            <person name="Serror P."/>
            <person name="Shin B.-S."/>
            <person name="Soldo B."/>
            <person name="Sorokin A."/>
            <person name="Tacconi E."/>
            <person name="Takagi T."/>
            <person name="Takahashi H."/>
            <person name="Takemaru K."/>
            <person name="Takeuchi M."/>
            <person name="Tamakoshi A."/>
            <person name="Tanaka T."/>
            <person name="Terpstra P."/>
            <person name="Tognoni A."/>
            <person name="Tosato V."/>
            <person name="Uchiyama S."/>
            <person name="Vandenbol M."/>
            <person name="Vannier F."/>
            <person name="Vassarotti A."/>
            <person name="Viari A."/>
            <person name="Wambutt R."/>
            <person name="Wedler E."/>
            <person name="Wedler H."/>
            <person name="Weitzenegger T."/>
            <person name="Winters P."/>
            <person name="Wipat A."/>
            <person name="Yamamoto H."/>
            <person name="Yamane K."/>
            <person name="Yasumoto K."/>
            <person name="Yata K."/>
            <person name="Yoshida K."/>
            <person name="Yoshikawa H.-F."/>
            <person name="Zumstein E."/>
            <person name="Yoshikawa H."/>
            <person name="Danchin A."/>
        </authorList>
    </citation>
    <scope>NUCLEOTIDE SEQUENCE [LARGE SCALE GENOMIC DNA]</scope>
    <source>
        <strain>168</strain>
    </source>
</reference>
<reference key="3">
    <citation type="submission" date="2006-10" db="PDB data bank">
        <title>Solution NMR structure of methionine sulfoxide reductase B using minimal constraint strategy; Northeast structural genomics target SR10.</title>
        <authorList>
            <consortium name="Northeast structural genomics consortium (NESG)"/>
        </authorList>
    </citation>
    <scope>STRUCTURE BY NMR</scope>
</reference>
<gene>
    <name evidence="1" type="primary">msrB</name>
    <name type="synonym">yppQ</name>
    <name type="ordered locus">BSU21680</name>
</gene>
<organism>
    <name type="scientific">Bacillus subtilis (strain 168)</name>
    <dbReference type="NCBI Taxonomy" id="224308"/>
    <lineage>
        <taxon>Bacteria</taxon>
        <taxon>Bacillati</taxon>
        <taxon>Bacillota</taxon>
        <taxon>Bacilli</taxon>
        <taxon>Bacillales</taxon>
        <taxon>Bacillaceae</taxon>
        <taxon>Bacillus</taxon>
    </lineage>
</organism>
<evidence type="ECO:0000255" key="1">
    <source>
        <dbReference type="HAMAP-Rule" id="MF_01400"/>
    </source>
</evidence>
<evidence type="ECO:0000255" key="2">
    <source>
        <dbReference type="PROSITE-ProRule" id="PRU01126"/>
    </source>
</evidence>
<evidence type="ECO:0007829" key="3">
    <source>
        <dbReference type="PDB" id="2KZN"/>
    </source>
</evidence>
<evidence type="ECO:0007829" key="4">
    <source>
        <dbReference type="PDB" id="3E0O"/>
    </source>
</evidence>
<comment type="catalytic activity">
    <reaction evidence="1">
        <text>L-methionyl-[protein] + [thioredoxin]-disulfide + H2O = L-methionyl-(R)-S-oxide-[protein] + [thioredoxin]-dithiol</text>
        <dbReference type="Rhea" id="RHEA:24164"/>
        <dbReference type="Rhea" id="RHEA-COMP:10698"/>
        <dbReference type="Rhea" id="RHEA-COMP:10700"/>
        <dbReference type="Rhea" id="RHEA-COMP:12313"/>
        <dbReference type="Rhea" id="RHEA-COMP:12314"/>
        <dbReference type="ChEBI" id="CHEBI:15377"/>
        <dbReference type="ChEBI" id="CHEBI:16044"/>
        <dbReference type="ChEBI" id="CHEBI:29950"/>
        <dbReference type="ChEBI" id="CHEBI:45764"/>
        <dbReference type="ChEBI" id="CHEBI:50058"/>
        <dbReference type="EC" id="1.8.4.12"/>
    </reaction>
</comment>
<comment type="similarity">
    <text evidence="1">Belongs to the MsrB Met sulfoxide reductase family.</text>
</comment>
<sequence>MAYNKEEKIKSLNRMQYEVTQNNGTEPPFQNEYWDHKEEGLYVDIVSGKPLFTSKDKFDSQCGWPSFTKPIEEEVEEKLDTSHGMIRTEVRSRTADSHLGHVFNDGPGPNGLRYCINSAALRFVPKHKLKEEGYESYLHLFNK</sequence>
<name>MSRB_BACSU</name>
<dbReference type="EC" id="1.8.4.12" evidence="1"/>
<dbReference type="EMBL" id="L77246">
    <property type="protein sequence ID" value="AAA96648.1"/>
    <property type="molecule type" value="Genomic_DNA"/>
</dbReference>
<dbReference type="EMBL" id="AL009126">
    <property type="protein sequence ID" value="CAB14086.1"/>
    <property type="molecule type" value="Genomic_DNA"/>
</dbReference>
<dbReference type="PIR" id="F69940">
    <property type="entry name" value="F69940"/>
</dbReference>
<dbReference type="RefSeq" id="NP_390051.1">
    <property type="nucleotide sequence ID" value="NC_000964.3"/>
</dbReference>
<dbReference type="RefSeq" id="WP_003230813.1">
    <property type="nucleotide sequence ID" value="NZ_OZ025638.1"/>
</dbReference>
<dbReference type="PDB" id="2KZN">
    <property type="method" value="NMR"/>
    <property type="chains" value="A=1-143"/>
</dbReference>
<dbReference type="PDB" id="3E0O">
    <property type="method" value="X-ray"/>
    <property type="resolution" value="2.60 A"/>
    <property type="chains" value="A/B/C/D/E/F=1-143"/>
</dbReference>
<dbReference type="PDBsum" id="2KZN"/>
<dbReference type="PDBsum" id="3E0O"/>
<dbReference type="BMRB" id="P54155"/>
<dbReference type="SMR" id="P54155"/>
<dbReference type="FunCoup" id="P54155">
    <property type="interactions" value="471"/>
</dbReference>
<dbReference type="STRING" id="224308.BSU21680"/>
<dbReference type="jPOST" id="P54155"/>
<dbReference type="PaxDb" id="224308-BSU21680"/>
<dbReference type="EnsemblBacteria" id="CAB14086">
    <property type="protein sequence ID" value="CAB14086"/>
    <property type="gene ID" value="BSU_21680"/>
</dbReference>
<dbReference type="GeneID" id="939102"/>
<dbReference type="KEGG" id="bsu:BSU21680"/>
<dbReference type="PATRIC" id="fig|224308.179.peg.2369"/>
<dbReference type="eggNOG" id="COG0229">
    <property type="taxonomic scope" value="Bacteria"/>
</dbReference>
<dbReference type="InParanoid" id="P54155"/>
<dbReference type="OrthoDB" id="4174719at2"/>
<dbReference type="PhylomeDB" id="P54155"/>
<dbReference type="BioCyc" id="BSUB:BSU21680-MONOMER"/>
<dbReference type="BRENDA" id="1.8.4.12">
    <property type="organism ID" value="658"/>
</dbReference>
<dbReference type="EvolutionaryTrace" id="P54155"/>
<dbReference type="Proteomes" id="UP000001570">
    <property type="component" value="Chromosome"/>
</dbReference>
<dbReference type="GO" id="GO:0005737">
    <property type="term" value="C:cytoplasm"/>
    <property type="evidence" value="ECO:0000318"/>
    <property type="project" value="GO_Central"/>
</dbReference>
<dbReference type="GO" id="GO:0033743">
    <property type="term" value="F:peptide-methionine (R)-S-oxide reductase activity"/>
    <property type="evidence" value="ECO:0000318"/>
    <property type="project" value="GO_Central"/>
</dbReference>
<dbReference type="GO" id="GO:0030091">
    <property type="term" value="P:protein repair"/>
    <property type="evidence" value="ECO:0007669"/>
    <property type="project" value="InterPro"/>
</dbReference>
<dbReference type="GO" id="GO:0006979">
    <property type="term" value="P:response to oxidative stress"/>
    <property type="evidence" value="ECO:0007669"/>
    <property type="project" value="InterPro"/>
</dbReference>
<dbReference type="FunFam" id="2.170.150.20:FF:000003">
    <property type="entry name" value="Peptide methionine sulfoxide reductase MsrB"/>
    <property type="match status" value="1"/>
</dbReference>
<dbReference type="Gene3D" id="2.170.150.20">
    <property type="entry name" value="Peptide methionine sulfoxide reductase"/>
    <property type="match status" value="1"/>
</dbReference>
<dbReference type="HAMAP" id="MF_01400">
    <property type="entry name" value="MsrB"/>
    <property type="match status" value="1"/>
</dbReference>
<dbReference type="InterPro" id="IPR028427">
    <property type="entry name" value="Met_Sox_Rdtase_MsrB"/>
</dbReference>
<dbReference type="InterPro" id="IPR002579">
    <property type="entry name" value="Met_Sox_Rdtase_MsrB_dom"/>
</dbReference>
<dbReference type="InterPro" id="IPR011057">
    <property type="entry name" value="Mss4-like_sf"/>
</dbReference>
<dbReference type="NCBIfam" id="TIGR00357">
    <property type="entry name" value="peptide-methionine (R)-S-oxide reductase MsrB"/>
    <property type="match status" value="1"/>
</dbReference>
<dbReference type="PANTHER" id="PTHR10173">
    <property type="entry name" value="METHIONINE SULFOXIDE REDUCTASE"/>
    <property type="match status" value="1"/>
</dbReference>
<dbReference type="PANTHER" id="PTHR10173:SF59">
    <property type="entry name" value="PEPTIDE METHIONINE SULFOXIDE REDUCTASE MSRA_MSRB"/>
    <property type="match status" value="1"/>
</dbReference>
<dbReference type="Pfam" id="PF01641">
    <property type="entry name" value="SelR"/>
    <property type="match status" value="1"/>
</dbReference>
<dbReference type="SUPFAM" id="SSF51316">
    <property type="entry name" value="Mss4-like"/>
    <property type="match status" value="1"/>
</dbReference>
<dbReference type="PROSITE" id="PS51790">
    <property type="entry name" value="MSRB"/>
    <property type="match status" value="1"/>
</dbReference>
<accession>P54155</accession>
<keyword id="KW-0002">3D-structure</keyword>
<keyword id="KW-0560">Oxidoreductase</keyword>
<keyword id="KW-1185">Reference proteome</keyword>
<proteinExistence type="evidence at protein level"/>
<feature type="chain" id="PRO_0000140262" description="Peptide methionine sulfoxide reductase MsrB">
    <location>
        <begin position="1"/>
        <end position="143"/>
    </location>
</feature>
<feature type="domain" description="MsrB" evidence="2">
    <location>
        <begin position="5"/>
        <end position="126"/>
    </location>
</feature>
<feature type="active site" description="Nucleophile" evidence="2">
    <location>
        <position position="115"/>
    </location>
</feature>
<feature type="helix" evidence="4">
    <location>
        <begin position="2"/>
        <end position="11"/>
    </location>
</feature>
<feature type="helix" evidence="4">
    <location>
        <begin position="14"/>
        <end position="22"/>
    </location>
</feature>
<feature type="turn" evidence="3">
    <location>
        <begin position="32"/>
        <end position="34"/>
    </location>
</feature>
<feature type="strand" evidence="4">
    <location>
        <begin position="39"/>
        <end position="44"/>
    </location>
</feature>
<feature type="turn" evidence="4">
    <location>
        <begin position="45"/>
        <end position="47"/>
    </location>
</feature>
<feature type="strand" evidence="4">
    <location>
        <begin position="50"/>
        <end position="53"/>
    </location>
</feature>
<feature type="turn" evidence="4">
    <location>
        <begin position="54"/>
        <end position="56"/>
    </location>
</feature>
<feature type="strand" evidence="3">
    <location>
        <begin position="60"/>
        <end position="64"/>
    </location>
</feature>
<feature type="strand" evidence="4">
    <location>
        <begin position="66"/>
        <end position="68"/>
    </location>
</feature>
<feature type="turn" evidence="4">
    <location>
        <begin position="72"/>
        <end position="74"/>
    </location>
</feature>
<feature type="strand" evidence="4">
    <location>
        <begin position="75"/>
        <end position="80"/>
    </location>
</feature>
<feature type="strand" evidence="4">
    <location>
        <begin position="87"/>
        <end position="92"/>
    </location>
</feature>
<feature type="turn" evidence="4">
    <location>
        <begin position="93"/>
        <end position="95"/>
    </location>
</feature>
<feature type="strand" evidence="4">
    <location>
        <begin position="98"/>
        <end position="104"/>
    </location>
</feature>
<feature type="strand" evidence="3">
    <location>
        <begin position="108"/>
        <end position="111"/>
    </location>
</feature>
<feature type="strand" evidence="4">
    <location>
        <begin position="113"/>
        <end position="116"/>
    </location>
</feature>
<feature type="helix" evidence="4">
    <location>
        <begin position="118"/>
        <end position="120"/>
    </location>
</feature>
<feature type="strand" evidence="4">
    <location>
        <begin position="121"/>
        <end position="125"/>
    </location>
</feature>
<feature type="helix" evidence="4">
    <location>
        <begin position="126"/>
        <end position="129"/>
    </location>
</feature>
<feature type="turn" evidence="4">
    <location>
        <begin position="130"/>
        <end position="133"/>
    </location>
</feature>
<feature type="helix" evidence="4">
    <location>
        <begin position="135"/>
        <end position="140"/>
    </location>
</feature>
<protein>
    <recommendedName>
        <fullName evidence="1">Peptide methionine sulfoxide reductase MsrB</fullName>
        <ecNumber evidence="1">1.8.4.12</ecNumber>
    </recommendedName>
    <alternativeName>
        <fullName evidence="1">Peptide-methionine (R)-S-oxide reductase</fullName>
    </alternativeName>
</protein>